<keyword id="KW-0687">Ribonucleoprotein</keyword>
<keyword id="KW-0689">Ribosomal protein</keyword>
<keyword id="KW-0694">RNA-binding</keyword>
<keyword id="KW-0699">rRNA-binding</keyword>
<comment type="function">
    <text evidence="1">Binds directly to 16S ribosomal RNA.</text>
</comment>
<comment type="similarity">
    <text evidence="1">Belongs to the bacterial ribosomal protein bS20 family.</text>
</comment>
<gene>
    <name evidence="1" type="primary">rpsT</name>
    <name type="ordered locus">SE_1272</name>
</gene>
<protein>
    <recommendedName>
        <fullName evidence="1">Small ribosomal subunit protein bS20</fullName>
    </recommendedName>
    <alternativeName>
        <fullName evidence="3">30S ribosomal protein S20</fullName>
    </alternativeName>
</protein>
<name>RS20_STAES</name>
<accession>Q8CSC6</accession>
<sequence length="83" mass="9341">MPNIKSAIKRVRTTETAEERNISKKNAMRTAVKRAKTAISTDAENKDELLRFAIKQVDKASQSNLIHSNKADRIKSKLMSANK</sequence>
<feature type="chain" id="PRO_0000236454" description="Small ribosomal subunit protein bS20">
    <location>
        <begin position="1"/>
        <end position="83"/>
    </location>
</feature>
<feature type="region of interest" description="Disordered" evidence="2">
    <location>
        <begin position="1"/>
        <end position="21"/>
    </location>
</feature>
<feature type="compositionally biased region" description="Basic and acidic residues" evidence="2">
    <location>
        <begin position="12"/>
        <end position="21"/>
    </location>
</feature>
<organism>
    <name type="scientific">Staphylococcus epidermidis (strain ATCC 12228 / FDA PCI 1200)</name>
    <dbReference type="NCBI Taxonomy" id="176280"/>
    <lineage>
        <taxon>Bacteria</taxon>
        <taxon>Bacillati</taxon>
        <taxon>Bacillota</taxon>
        <taxon>Bacilli</taxon>
        <taxon>Bacillales</taxon>
        <taxon>Staphylococcaceae</taxon>
        <taxon>Staphylococcus</taxon>
    </lineage>
</organism>
<dbReference type="EMBL" id="AE015929">
    <property type="protein sequence ID" value="AAO04871.1"/>
    <property type="molecule type" value="Genomic_DNA"/>
</dbReference>
<dbReference type="RefSeq" id="NP_764827.1">
    <property type="nucleotide sequence ID" value="NC_004461.1"/>
</dbReference>
<dbReference type="RefSeq" id="WP_001831221.1">
    <property type="nucleotide sequence ID" value="NZ_WBME01000008.1"/>
</dbReference>
<dbReference type="SMR" id="Q8CSC6"/>
<dbReference type="GeneID" id="50018612"/>
<dbReference type="KEGG" id="sep:SE_1272"/>
<dbReference type="PATRIC" id="fig|176280.10.peg.1241"/>
<dbReference type="eggNOG" id="COG0268">
    <property type="taxonomic scope" value="Bacteria"/>
</dbReference>
<dbReference type="HOGENOM" id="CLU_160655_1_1_9"/>
<dbReference type="OrthoDB" id="9808392at2"/>
<dbReference type="Proteomes" id="UP000001411">
    <property type="component" value="Chromosome"/>
</dbReference>
<dbReference type="GO" id="GO:0005829">
    <property type="term" value="C:cytosol"/>
    <property type="evidence" value="ECO:0007669"/>
    <property type="project" value="TreeGrafter"/>
</dbReference>
<dbReference type="GO" id="GO:0015935">
    <property type="term" value="C:small ribosomal subunit"/>
    <property type="evidence" value="ECO:0007669"/>
    <property type="project" value="TreeGrafter"/>
</dbReference>
<dbReference type="GO" id="GO:0070181">
    <property type="term" value="F:small ribosomal subunit rRNA binding"/>
    <property type="evidence" value="ECO:0007669"/>
    <property type="project" value="TreeGrafter"/>
</dbReference>
<dbReference type="GO" id="GO:0003735">
    <property type="term" value="F:structural constituent of ribosome"/>
    <property type="evidence" value="ECO:0007669"/>
    <property type="project" value="InterPro"/>
</dbReference>
<dbReference type="GO" id="GO:0006412">
    <property type="term" value="P:translation"/>
    <property type="evidence" value="ECO:0007669"/>
    <property type="project" value="UniProtKB-UniRule"/>
</dbReference>
<dbReference type="Gene3D" id="1.20.58.110">
    <property type="entry name" value="Ribosomal protein S20"/>
    <property type="match status" value="1"/>
</dbReference>
<dbReference type="HAMAP" id="MF_00500">
    <property type="entry name" value="Ribosomal_bS20"/>
    <property type="match status" value="1"/>
</dbReference>
<dbReference type="InterPro" id="IPR002583">
    <property type="entry name" value="Ribosomal_bS20"/>
</dbReference>
<dbReference type="InterPro" id="IPR036510">
    <property type="entry name" value="Ribosomal_bS20_sf"/>
</dbReference>
<dbReference type="NCBIfam" id="TIGR00029">
    <property type="entry name" value="S20"/>
    <property type="match status" value="1"/>
</dbReference>
<dbReference type="PANTHER" id="PTHR33398">
    <property type="entry name" value="30S RIBOSOMAL PROTEIN S20"/>
    <property type="match status" value="1"/>
</dbReference>
<dbReference type="PANTHER" id="PTHR33398:SF1">
    <property type="entry name" value="SMALL RIBOSOMAL SUBUNIT PROTEIN BS20C"/>
    <property type="match status" value="1"/>
</dbReference>
<dbReference type="Pfam" id="PF01649">
    <property type="entry name" value="Ribosomal_S20p"/>
    <property type="match status" value="1"/>
</dbReference>
<dbReference type="SUPFAM" id="SSF46992">
    <property type="entry name" value="Ribosomal protein S20"/>
    <property type="match status" value="1"/>
</dbReference>
<reference key="1">
    <citation type="journal article" date="2003" name="Mol. Microbiol.">
        <title>Genome-based analysis of virulence genes in a non-biofilm-forming Staphylococcus epidermidis strain (ATCC 12228).</title>
        <authorList>
            <person name="Zhang Y.-Q."/>
            <person name="Ren S.-X."/>
            <person name="Li H.-L."/>
            <person name="Wang Y.-X."/>
            <person name="Fu G."/>
            <person name="Yang J."/>
            <person name="Qin Z.-Q."/>
            <person name="Miao Y.-G."/>
            <person name="Wang W.-Y."/>
            <person name="Chen R.-S."/>
            <person name="Shen Y."/>
            <person name="Chen Z."/>
            <person name="Yuan Z.-H."/>
            <person name="Zhao G.-P."/>
            <person name="Qu D."/>
            <person name="Danchin A."/>
            <person name="Wen Y.-M."/>
        </authorList>
    </citation>
    <scope>NUCLEOTIDE SEQUENCE [LARGE SCALE GENOMIC DNA]</scope>
    <source>
        <strain>ATCC 12228 / FDA PCI 1200</strain>
    </source>
</reference>
<evidence type="ECO:0000255" key="1">
    <source>
        <dbReference type="HAMAP-Rule" id="MF_00500"/>
    </source>
</evidence>
<evidence type="ECO:0000256" key="2">
    <source>
        <dbReference type="SAM" id="MobiDB-lite"/>
    </source>
</evidence>
<evidence type="ECO:0000305" key="3"/>
<proteinExistence type="inferred from homology"/>